<organism>
    <name type="scientific">Physcomitrium patens</name>
    <name type="common">Spreading-leaved earth moss</name>
    <name type="synonym">Physcomitrella patens</name>
    <dbReference type="NCBI Taxonomy" id="3218"/>
    <lineage>
        <taxon>Eukaryota</taxon>
        <taxon>Viridiplantae</taxon>
        <taxon>Streptophyta</taxon>
        <taxon>Embryophyta</taxon>
        <taxon>Bryophyta</taxon>
        <taxon>Bryophytina</taxon>
        <taxon>Bryopsida</taxon>
        <taxon>Funariidae</taxon>
        <taxon>Funariales</taxon>
        <taxon>Funariaceae</taxon>
        <taxon>Physcomitrium</taxon>
    </lineage>
</organism>
<geneLocation type="chloroplast"/>
<reference key="1">
    <citation type="journal article" date="2003" name="Nucleic Acids Res.">
        <title>Complete chloroplast DNA sequence of the moss Physcomitrella patens: evidence for the loss and relocation of rpoA from the chloroplast to the nucleus.</title>
        <authorList>
            <person name="Sugiura C."/>
            <person name="Kobayashi Y."/>
            <person name="Setsuyuki A."/>
            <person name="Sugita C."/>
            <person name="Sugita M."/>
        </authorList>
    </citation>
    <scope>NUCLEOTIDE SEQUENCE [LARGE SCALE GENOMIC DNA]</scope>
    <source>
        <strain>cv. Gransden 2004</strain>
    </source>
</reference>
<feature type="chain" id="PRO_0000125319" description="Large ribosomal subunit protein uL22c">
    <location>
        <begin position="1"/>
        <end position="118"/>
    </location>
</feature>
<name>RK22_PHYPA</name>
<keyword id="KW-0150">Chloroplast</keyword>
<keyword id="KW-0934">Plastid</keyword>
<keyword id="KW-1185">Reference proteome</keyword>
<keyword id="KW-0687">Ribonucleoprotein</keyword>
<keyword id="KW-0689">Ribosomal protein</keyword>
<keyword id="KW-0694">RNA-binding</keyword>
<keyword id="KW-0699">rRNA-binding</keyword>
<accession>Q6YXK7</accession>
<evidence type="ECO:0000250" key="1"/>
<evidence type="ECO:0000305" key="2"/>
<comment type="function">
    <text evidence="1">This protein binds specifically to 23S rRNA.</text>
</comment>
<comment type="function">
    <text evidence="1">The globular domain of the protein is located near the polypeptide exit tunnel on the outside of the subunit, while an extended beta-hairpin is found that lines the wall of the exit tunnel in the center of the 70S ribosome.</text>
</comment>
<comment type="subunit">
    <text evidence="1">Part of the 50S ribosomal subunit.</text>
</comment>
<comment type="subcellular location">
    <subcellularLocation>
        <location>Plastid</location>
        <location>Chloroplast</location>
    </subcellularLocation>
</comment>
<comment type="similarity">
    <text evidence="2">Belongs to the universal ribosomal protein uL22 family.</text>
</comment>
<sequence>MKSDKSNLEVRALAKHIRMSAHKARRVVNQIRGRSYEQALMILEFMPYRACYPILQLVSSAAANANHNLNLNRANLIISEAKVDEGPVLKRFQPRAQGRGYPIHKPTCHITITVKNKN</sequence>
<proteinExistence type="inferred from homology"/>
<protein>
    <recommendedName>
        <fullName evidence="2">Large ribosomal subunit protein uL22c</fullName>
    </recommendedName>
    <alternativeName>
        <fullName>50S ribosomal protein L22, chloroplastic</fullName>
    </alternativeName>
</protein>
<gene>
    <name type="primary">rpl22</name>
</gene>
<dbReference type="EMBL" id="AP005672">
    <property type="protein sequence ID" value="BAC85081.1"/>
    <property type="molecule type" value="Genomic_DNA"/>
</dbReference>
<dbReference type="RefSeq" id="NP_904231.1">
    <property type="nucleotide sequence ID" value="NC_005087.2"/>
</dbReference>
<dbReference type="RefSeq" id="YP_009477561.1">
    <property type="nucleotide sequence ID" value="NC_037465.1"/>
</dbReference>
<dbReference type="SMR" id="Q6YXK7"/>
<dbReference type="FunCoup" id="Q6YXK7">
    <property type="interactions" value="519"/>
</dbReference>
<dbReference type="STRING" id="3218.Q6YXK7"/>
<dbReference type="GeneID" id="2546778"/>
<dbReference type="GeneID" id="36487194"/>
<dbReference type="KEGG" id="ppp:2546778"/>
<dbReference type="InParanoid" id="Q6YXK7"/>
<dbReference type="OrthoDB" id="1840754at2759"/>
<dbReference type="Proteomes" id="UP000006727">
    <property type="component" value="Chloroplast"/>
</dbReference>
<dbReference type="GO" id="GO:0009507">
    <property type="term" value="C:chloroplast"/>
    <property type="evidence" value="ECO:0007669"/>
    <property type="project" value="UniProtKB-SubCell"/>
</dbReference>
<dbReference type="GO" id="GO:0015934">
    <property type="term" value="C:large ribosomal subunit"/>
    <property type="evidence" value="ECO:0000318"/>
    <property type="project" value="GO_Central"/>
</dbReference>
<dbReference type="GO" id="GO:0019843">
    <property type="term" value="F:rRNA binding"/>
    <property type="evidence" value="ECO:0007669"/>
    <property type="project" value="UniProtKB-UniRule"/>
</dbReference>
<dbReference type="GO" id="GO:0003735">
    <property type="term" value="F:structural constituent of ribosome"/>
    <property type="evidence" value="ECO:0000318"/>
    <property type="project" value="GO_Central"/>
</dbReference>
<dbReference type="GO" id="GO:0006412">
    <property type="term" value="P:translation"/>
    <property type="evidence" value="ECO:0000318"/>
    <property type="project" value="GO_Central"/>
</dbReference>
<dbReference type="CDD" id="cd00336">
    <property type="entry name" value="Ribosomal_L22"/>
    <property type="match status" value="1"/>
</dbReference>
<dbReference type="FunFam" id="3.90.470.10:FF:000004">
    <property type="entry name" value="50S ribosomal protein L22, chloroplastic"/>
    <property type="match status" value="1"/>
</dbReference>
<dbReference type="Gene3D" id="3.90.470.10">
    <property type="entry name" value="Ribosomal protein L22/L17"/>
    <property type="match status" value="1"/>
</dbReference>
<dbReference type="HAMAP" id="MF_01331_B">
    <property type="entry name" value="Ribosomal_uL22_B"/>
    <property type="match status" value="1"/>
</dbReference>
<dbReference type="InterPro" id="IPR001063">
    <property type="entry name" value="Ribosomal_uL22"/>
</dbReference>
<dbReference type="InterPro" id="IPR005727">
    <property type="entry name" value="Ribosomal_uL22_bac/chlpt-type"/>
</dbReference>
<dbReference type="InterPro" id="IPR047867">
    <property type="entry name" value="Ribosomal_uL22_bac/org-type"/>
</dbReference>
<dbReference type="InterPro" id="IPR018260">
    <property type="entry name" value="Ribosomal_uL22_CS"/>
</dbReference>
<dbReference type="InterPro" id="IPR036394">
    <property type="entry name" value="Ribosomal_uL22_sf"/>
</dbReference>
<dbReference type="NCBIfam" id="TIGR01044">
    <property type="entry name" value="rplV_bact"/>
    <property type="match status" value="1"/>
</dbReference>
<dbReference type="PANTHER" id="PTHR13501">
    <property type="entry name" value="CHLOROPLAST 50S RIBOSOMAL PROTEIN L22-RELATED"/>
    <property type="match status" value="1"/>
</dbReference>
<dbReference type="PANTHER" id="PTHR13501:SF10">
    <property type="entry name" value="LARGE RIBOSOMAL SUBUNIT PROTEIN UL22M"/>
    <property type="match status" value="1"/>
</dbReference>
<dbReference type="Pfam" id="PF00237">
    <property type="entry name" value="Ribosomal_L22"/>
    <property type="match status" value="1"/>
</dbReference>
<dbReference type="SUPFAM" id="SSF54843">
    <property type="entry name" value="Ribosomal protein L22"/>
    <property type="match status" value="1"/>
</dbReference>
<dbReference type="PROSITE" id="PS00464">
    <property type="entry name" value="RIBOSOMAL_L22"/>
    <property type="match status" value="1"/>
</dbReference>